<sequence>MYKLQVVLVPPSLQATMPIQFGYGPTIAESSQLLPNRTNMAQSAGDASLQYANLRSANVSFTPSYFNQSRFRKFLLFTKPTNTLLNLSDEIIDKCEKMYPSLQEDIEILSLQDNSGCDLDPDFLVKDVFNVNNIVRVILKNEIDLDDSAPVSLYKSVKRSKLNNGSPQSVQPQQQIPSSSGVLRIAKKRPPTGTTTTTTIRSATNGSMRVSTPLARQIYPPPSSKIVSNNSDDEDEDIGERSFLPPPTQPQSPPIRISSGIDAGKKIKSSIVEEDIVSRSATVDPDKTKQQRLLSGTPIMSTMTPNRVTLTGQRVVSEHAHKNELVFSASASSSSFANGGTAAVTAQDINRKPPVTTPRITSGMLKIPEPRISEIEKELKEGPSSPASILPAKAAKIPMKKPYLENGENYESDDSSSSENQETPETEPHSKASLQRSQSSIADNNGSPVKNSPLGDAMPHNVHLAELPKASNTSITKSSNGESWGKQQEHQPPRKSSLETIVEKKSQAEPSGIVEPKRMTNFLDDNQVREKEDTNDKLLEKEILPTIPHNDQPILASSDKSNGTLKSLAGKVSSNNNASKEDGTIINGTIEDDGNDNDEVDTTVRIVPQDSDSSSFPKSDLFKMIEGDDTDLPQWFKGKNSRTSGNSKNSKPYTTVLNKDIDNSKPDPRNILPQRTPRSAAKRAAQLLAGAKKNEVPQKSTEDSSSAASTDDESESGIETDFSSDDDFKRKNMSVPNNGPKDISLHSLKGSVVPVKDSKIINKEVDEERNDKRDSQKKSAVSESSVTNSKISEQMAKSFYPNSNKKQNEATKVETKPATQASSFPVVGGSPSVATKGTTSFNEEGNRKNVKTKAKNESAQIDRQQKETTSRVADLKSANIGGEDLNKKAEGSKEPEKASANIQDANDKNNSKEKEDSKSKQVSQKKLKMTDHLKEGNVQLPKPSANDKLKDLKAKFTNSKTLVPPGIISNEKNNSSANDDDSSSSGSSTEDESSSSSSSSDEETSTSRKARRVVVNTPREPVRSSSKIEAPSPSVNKKINATPDKIPVTQLMDMSSPPSVKSKTTSNPSSILHDLPRKVRPSLSSLSDLVSRGIPDVKEKTSKSNEKSQTKAPSSSDDESSSDSDSNSSSDSVSDSSSDSKSESDSDDSGDSSDDGKSFISAKSASAALGKKKKPSGGFASLIKDFKKK</sequence>
<name>NET1_YEAST</name>
<proteinExistence type="evidence at protein level"/>
<gene>
    <name type="primary">NET1</name>
    <name type="synonym">CFI1</name>
    <name type="synonym">ESC5</name>
    <name type="synonym">SRM8</name>
    <name type="ordered locus">YJL076W</name>
    <name type="ORF">J1038</name>
</gene>
<protein>
    <recommendedName>
        <fullName>Nucleolar protein NET1</fullName>
    </recommendedName>
</protein>
<reference key="1">
    <citation type="journal article" date="1996" name="EMBO J.">
        <title>Complete nucleotide sequence of Saccharomyces cerevisiae chromosome X.</title>
        <authorList>
            <person name="Galibert F."/>
            <person name="Alexandraki D."/>
            <person name="Baur A."/>
            <person name="Boles E."/>
            <person name="Chalwatzis N."/>
            <person name="Chuat J.-C."/>
            <person name="Coster F."/>
            <person name="Cziepluch C."/>
            <person name="de Haan M."/>
            <person name="Domdey H."/>
            <person name="Durand P."/>
            <person name="Entian K.-D."/>
            <person name="Gatius M."/>
            <person name="Goffeau A."/>
            <person name="Grivell L.A."/>
            <person name="Hennemann A."/>
            <person name="Herbert C.J."/>
            <person name="Heumann K."/>
            <person name="Hilger F."/>
            <person name="Hollenberg C.P."/>
            <person name="Huang M.-E."/>
            <person name="Jacq C."/>
            <person name="Jauniaux J.-C."/>
            <person name="Katsoulou C."/>
            <person name="Kirchrath L."/>
            <person name="Kleine K."/>
            <person name="Kordes E."/>
            <person name="Koetter P."/>
            <person name="Liebl S."/>
            <person name="Louis E.J."/>
            <person name="Manus V."/>
            <person name="Mewes H.-W."/>
            <person name="Miosga T."/>
            <person name="Obermaier B."/>
            <person name="Perea J."/>
            <person name="Pohl T.M."/>
            <person name="Portetelle D."/>
            <person name="Pujol A."/>
            <person name="Purnelle B."/>
            <person name="Ramezani Rad M."/>
            <person name="Rasmussen S.W."/>
            <person name="Rose M."/>
            <person name="Rossau R."/>
            <person name="Schaaff-Gerstenschlaeger I."/>
            <person name="Smits P.H.M."/>
            <person name="Scarcez T."/>
            <person name="Soriano N."/>
            <person name="To Van D."/>
            <person name="Tzermia M."/>
            <person name="Van Broekhoven A."/>
            <person name="Vandenbol M."/>
            <person name="Wedler H."/>
            <person name="von Wettstein D."/>
            <person name="Wambutt R."/>
            <person name="Zagulski M."/>
            <person name="Zollner A."/>
            <person name="Karpfinger-Hartl L."/>
        </authorList>
    </citation>
    <scope>NUCLEOTIDE SEQUENCE [LARGE SCALE GENOMIC DNA]</scope>
    <source>
        <strain>ATCC 204508 / S288c</strain>
    </source>
</reference>
<reference key="2">
    <citation type="journal article" date="2014" name="G3 (Bethesda)">
        <title>The reference genome sequence of Saccharomyces cerevisiae: Then and now.</title>
        <authorList>
            <person name="Engel S.R."/>
            <person name="Dietrich F.S."/>
            <person name="Fisk D.G."/>
            <person name="Binkley G."/>
            <person name="Balakrishnan R."/>
            <person name="Costanzo M.C."/>
            <person name="Dwight S.S."/>
            <person name="Hitz B.C."/>
            <person name="Karra K."/>
            <person name="Nash R.S."/>
            <person name="Weng S."/>
            <person name="Wong E.D."/>
            <person name="Lloyd P."/>
            <person name="Skrzypek M.S."/>
            <person name="Miyasato S.R."/>
            <person name="Simison M."/>
            <person name="Cherry J.M."/>
        </authorList>
    </citation>
    <scope>GENOME REANNOTATION</scope>
    <source>
        <strain>ATCC 204508 / S288c</strain>
    </source>
</reference>
<reference key="3">
    <citation type="journal article" date="2002" name="Biochem. Biophys. Res. Commun.">
        <title>Budding yeast Cdc5 phosphorylates Net1 and assists Cdc14 release from the nucleolus.</title>
        <authorList>
            <person name="Yoshida S."/>
            <person name="Toh-e A."/>
        </authorList>
    </citation>
    <scope>FUNCTION</scope>
    <scope>SUBUNIT</scope>
    <scope>SUBCELLULAR LOCATION</scope>
    <scope>PHOSPHORYLATION</scope>
</reference>
<reference key="4">
    <citation type="journal article" date="2001" name="Mol. Cell">
        <title>Net1 stimulates RNA polymerase I transcription and regulates nucleolar structure independently of controlling mitotic exit.</title>
        <authorList>
            <person name="Shou W."/>
            <person name="Sakamoto K.M."/>
            <person name="Keener J."/>
            <person name="Morimoto K.W."/>
            <person name="Traverso E.E."/>
            <person name="Azzam R."/>
            <person name="Hoppe G.J."/>
            <person name="Feldman R.M.R."/>
            <person name="DeModena J."/>
            <person name="Moazed D."/>
            <person name="Charbonneau H."/>
            <person name="Nomura M."/>
            <person name="Deshaies R.J."/>
        </authorList>
    </citation>
    <scope>FUNCTION</scope>
    <scope>SUBUNIT</scope>
</reference>
<reference key="5">
    <citation type="journal article" date="2003" name="Nature">
        <title>Global analysis of protein expression in yeast.</title>
        <authorList>
            <person name="Ghaemmaghami S."/>
            <person name="Huh W.-K."/>
            <person name="Bower K."/>
            <person name="Howson R.W."/>
            <person name="Belle A."/>
            <person name="Dephoure N."/>
            <person name="O'Shea E.K."/>
            <person name="Weissman J.S."/>
        </authorList>
    </citation>
    <scope>LEVEL OF PROTEIN EXPRESSION [LARGE SCALE ANALYSIS]</scope>
</reference>
<reference key="6">
    <citation type="journal article" date="2007" name="J. Proteome Res.">
        <title>Large-scale phosphorylation analysis of alpha-factor-arrested Saccharomyces cerevisiae.</title>
        <authorList>
            <person name="Li X."/>
            <person name="Gerber S.A."/>
            <person name="Rudner A.D."/>
            <person name="Beausoleil S.A."/>
            <person name="Haas W."/>
            <person name="Villen J."/>
            <person name="Elias J.E."/>
            <person name="Gygi S.P."/>
        </authorList>
    </citation>
    <scope>PHOSPHORYLATION [LARGE SCALE ANALYSIS] AT SER-231; SER-497 AND THR-676</scope>
    <scope>IDENTIFICATION BY MASS SPECTROMETRY [LARGE SCALE ANALYSIS]</scope>
    <source>
        <strain>ADR376</strain>
    </source>
</reference>
<reference key="7">
    <citation type="journal article" date="2007" name="Proc. Natl. Acad. Sci. U.S.A.">
        <title>Analysis of phosphorylation sites on proteins from Saccharomyces cerevisiae by electron transfer dissociation (ETD) mass spectrometry.</title>
        <authorList>
            <person name="Chi A."/>
            <person name="Huttenhower C."/>
            <person name="Geer L.Y."/>
            <person name="Coon J.J."/>
            <person name="Syka J.E.P."/>
            <person name="Bai D.L."/>
            <person name="Shabanowitz J."/>
            <person name="Burke D.J."/>
            <person name="Troyanskaya O.G."/>
            <person name="Hunt D.F."/>
        </authorList>
    </citation>
    <scope>IDENTIFICATION BY MASS SPECTROMETRY [LARGE SCALE ANALYSIS]</scope>
</reference>
<reference key="8">
    <citation type="journal article" date="2008" name="Mol. Cell. Proteomics">
        <title>A multidimensional chromatography technology for in-depth phosphoproteome analysis.</title>
        <authorList>
            <person name="Albuquerque C.P."/>
            <person name="Smolka M.B."/>
            <person name="Payne S.H."/>
            <person name="Bafna V."/>
            <person name="Eng J."/>
            <person name="Zhou H."/>
        </authorList>
    </citation>
    <scope>PHOSPHORYLATION [LARGE SCALE ANALYSIS] AT SER-231; SER-252; SER-830 AND THR-1042</scope>
    <scope>IDENTIFICATION BY MASS SPECTROMETRY [LARGE SCALE ANALYSIS]</scope>
</reference>
<reference key="9">
    <citation type="journal article" date="2009" name="Science">
        <title>Global analysis of Cdk1 substrate phosphorylation sites provides insights into evolution.</title>
        <authorList>
            <person name="Holt L.J."/>
            <person name="Tuch B.B."/>
            <person name="Villen J."/>
            <person name="Johnson A.D."/>
            <person name="Gygi S.P."/>
            <person name="Morgan D.O."/>
        </authorList>
    </citation>
    <scope>PHOSPHORYLATION [LARGE SCALE ANALYSIS] AT SER-60; SER-166; SER-231; SER-437; SER-439; SER-447; SER-452; SER-497; THR-1042; SER-1056 AND SER-1059</scope>
    <scope>IDENTIFICATION BY MASS SPECTROMETRY [LARGE SCALE ANALYSIS]</scope>
</reference>
<reference key="10">
    <citation type="journal article" date="2012" name="Nucleic Acids Res.">
        <title>Nsi1 plays a significant role in the silencing of ribosomal DNA in Saccharomyces cerevisiae.</title>
        <authorList>
            <person name="Ha C.W."/>
            <person name="Sung M.K."/>
            <person name="Huh W.K."/>
        </authorList>
    </citation>
    <scope>INTERACTION WITH NSI1</scope>
</reference>
<keyword id="KW-0131">Cell cycle</keyword>
<keyword id="KW-0132">Cell division</keyword>
<keyword id="KW-0498">Mitosis</keyword>
<keyword id="KW-0539">Nucleus</keyword>
<keyword id="KW-0597">Phosphoprotein</keyword>
<keyword id="KW-1185">Reference proteome</keyword>
<feature type="chain" id="PRO_0000096784" description="Nucleolar protein NET1">
    <location>
        <begin position="1"/>
        <end position="1189"/>
    </location>
</feature>
<feature type="region of interest" description="Disordered" evidence="1">
    <location>
        <begin position="160"/>
        <end position="260"/>
    </location>
</feature>
<feature type="region of interest" description="Disordered" evidence="1">
    <location>
        <begin position="345"/>
        <end position="1189"/>
    </location>
</feature>
<feature type="compositionally biased region" description="Low complexity" evidence="1">
    <location>
        <begin position="166"/>
        <end position="180"/>
    </location>
</feature>
<feature type="compositionally biased region" description="Polar residues" evidence="1">
    <location>
        <begin position="200"/>
        <end position="210"/>
    </location>
</feature>
<feature type="compositionally biased region" description="Pro residues" evidence="1">
    <location>
        <begin position="244"/>
        <end position="253"/>
    </location>
</feature>
<feature type="compositionally biased region" description="Basic and acidic residues" evidence="1">
    <location>
        <begin position="368"/>
        <end position="381"/>
    </location>
</feature>
<feature type="compositionally biased region" description="Low complexity" evidence="1">
    <location>
        <begin position="391"/>
        <end position="407"/>
    </location>
</feature>
<feature type="compositionally biased region" description="Polar residues" evidence="1">
    <location>
        <begin position="432"/>
        <end position="450"/>
    </location>
</feature>
<feature type="compositionally biased region" description="Polar residues" evidence="1">
    <location>
        <begin position="470"/>
        <end position="486"/>
    </location>
</feature>
<feature type="compositionally biased region" description="Basic and acidic residues" evidence="1">
    <location>
        <begin position="526"/>
        <end position="543"/>
    </location>
</feature>
<feature type="compositionally biased region" description="Acidic residues" evidence="1">
    <location>
        <begin position="590"/>
        <end position="601"/>
    </location>
</feature>
<feature type="compositionally biased region" description="Polar residues" evidence="1">
    <location>
        <begin position="641"/>
        <end position="657"/>
    </location>
</feature>
<feature type="compositionally biased region" description="Basic and acidic residues" evidence="1">
    <location>
        <begin position="659"/>
        <end position="668"/>
    </location>
</feature>
<feature type="compositionally biased region" description="Low complexity" evidence="1">
    <location>
        <begin position="682"/>
        <end position="691"/>
    </location>
</feature>
<feature type="compositionally biased region" description="Basic and acidic residues" evidence="1">
    <location>
        <begin position="692"/>
        <end position="702"/>
    </location>
</feature>
<feature type="compositionally biased region" description="Acidic residues" evidence="1">
    <location>
        <begin position="710"/>
        <end position="725"/>
    </location>
</feature>
<feature type="compositionally biased region" description="Basic and acidic residues" evidence="1">
    <location>
        <begin position="756"/>
        <end position="777"/>
    </location>
</feature>
<feature type="compositionally biased region" description="Polar residues" evidence="1">
    <location>
        <begin position="778"/>
        <end position="792"/>
    </location>
</feature>
<feature type="compositionally biased region" description="Basic and acidic residues" evidence="1">
    <location>
        <begin position="806"/>
        <end position="815"/>
    </location>
</feature>
<feature type="compositionally biased region" description="Low complexity" evidence="1">
    <location>
        <begin position="822"/>
        <end position="833"/>
    </location>
</feature>
<feature type="compositionally biased region" description="Basic and acidic residues" evidence="1">
    <location>
        <begin position="884"/>
        <end position="897"/>
    </location>
</feature>
<feature type="compositionally biased region" description="Basic and acidic residues" evidence="1">
    <location>
        <begin position="905"/>
        <end position="919"/>
    </location>
</feature>
<feature type="compositionally biased region" description="Basic and acidic residues" evidence="1">
    <location>
        <begin position="945"/>
        <end position="954"/>
    </location>
</feature>
<feature type="compositionally biased region" description="Low complexity" evidence="1">
    <location>
        <begin position="969"/>
        <end position="999"/>
    </location>
</feature>
<feature type="compositionally biased region" description="Polar residues" evidence="1">
    <location>
        <begin position="1023"/>
        <end position="1039"/>
    </location>
</feature>
<feature type="compositionally biased region" description="Low complexity" evidence="1">
    <location>
        <begin position="1055"/>
        <end position="1070"/>
    </location>
</feature>
<feature type="compositionally biased region" description="Basic and acidic residues" evidence="1">
    <location>
        <begin position="1095"/>
        <end position="1109"/>
    </location>
</feature>
<feature type="compositionally biased region" description="Low complexity" evidence="1">
    <location>
        <begin position="1123"/>
        <end position="1137"/>
    </location>
</feature>
<feature type="compositionally biased region" description="Low complexity" evidence="1">
    <location>
        <begin position="1158"/>
        <end position="1169"/>
    </location>
</feature>
<feature type="modified residue" description="Phosphoserine" evidence="9">
    <location>
        <position position="60"/>
    </location>
</feature>
<feature type="modified residue" description="Phosphoserine" evidence="9">
    <location>
        <position position="166"/>
    </location>
</feature>
<feature type="modified residue" description="Phosphoserine" evidence="7 8 9">
    <location>
        <position position="231"/>
    </location>
</feature>
<feature type="modified residue" description="Phosphoserine" evidence="8">
    <location>
        <position position="252"/>
    </location>
</feature>
<feature type="modified residue" description="Phosphoserine" evidence="9">
    <location>
        <position position="437"/>
    </location>
</feature>
<feature type="modified residue" description="Phosphoserine" evidence="9">
    <location>
        <position position="439"/>
    </location>
</feature>
<feature type="modified residue" description="Phosphoserine" evidence="9">
    <location>
        <position position="447"/>
    </location>
</feature>
<feature type="modified residue" description="Phosphoserine" evidence="9">
    <location>
        <position position="452"/>
    </location>
</feature>
<feature type="modified residue" description="Phosphoserine" evidence="7 9">
    <location>
        <position position="497"/>
    </location>
</feature>
<feature type="modified residue" description="Phosphothreonine" evidence="7">
    <location>
        <position position="676"/>
    </location>
</feature>
<feature type="modified residue" description="Phosphoserine" evidence="8">
    <location>
        <position position="830"/>
    </location>
</feature>
<feature type="modified residue" description="Phosphothreonine" evidence="8 9">
    <location>
        <position position="1042"/>
    </location>
</feature>
<feature type="modified residue" description="Phosphoserine" evidence="9">
    <location>
        <position position="1056"/>
    </location>
</feature>
<feature type="modified residue" description="Phosphoserine" evidence="9">
    <location>
        <position position="1059"/>
    </location>
</feature>
<evidence type="ECO:0000256" key="1">
    <source>
        <dbReference type="SAM" id="MobiDB-lite"/>
    </source>
</evidence>
<evidence type="ECO:0000269" key="2">
    <source>
    </source>
</evidence>
<evidence type="ECO:0000269" key="3">
    <source>
    </source>
</evidence>
<evidence type="ECO:0000269" key="4">
    <source>
    </source>
</evidence>
<evidence type="ECO:0000269" key="5">
    <source>
    </source>
</evidence>
<evidence type="ECO:0000305" key="6"/>
<evidence type="ECO:0007744" key="7">
    <source>
    </source>
</evidence>
<evidence type="ECO:0007744" key="8">
    <source>
    </source>
</evidence>
<evidence type="ECO:0007744" key="9">
    <source>
    </source>
</evidence>
<accession>P47035</accession>
<accession>D6VWA8</accession>
<comment type="function">
    <text evidence="2 3">Has a role in chromosome maintenance and is involved in mitotic exit. Inhibits the action of CDC14 by sequestering it in the nucleolus. Also binds to RNA polymerase I and stimulates rRNA synthesis. Influences RDNA chromatin by tethering SIR2 to rDNA in the nucleolus.</text>
</comment>
<comment type="subunit">
    <text evidence="2 3 5">Component of the RENT complex which is composed of at least NET1, CDC14 and SIR2 (PubMed:11511359, PubMed:12056824). Interacts with NSI1 (PubMed:22362748).</text>
</comment>
<comment type="interaction">
    <interactant intactId="EBI-25953">
        <id>P47035</id>
    </interactant>
    <interactant intactId="EBI-4192">
        <id>Q00684</id>
        <label>CDC14</label>
    </interactant>
    <organismsDiffer>false</organismsDiffer>
    <experiments>14</experiments>
</comment>
<comment type="interaction">
    <interactant intactId="EBI-25953">
        <id>P47035</id>
    </interactant>
    <interactant intactId="EBI-9957">
        <id>P00572</id>
        <label>CDC8</label>
    </interactant>
    <organismsDiffer>false</organismsDiffer>
    <experiments>2</experiments>
</comment>
<comment type="interaction">
    <interactant intactId="EBI-25953">
        <id>P47035</id>
    </interactant>
    <interactant intactId="EBI-505">
        <id>P53131</id>
        <label>PRP43</label>
    </interactant>
    <organismsDiffer>false</organismsDiffer>
    <experiments>2</experiments>
</comment>
<comment type="interaction">
    <interactant intactId="EBI-25953">
        <id>P47035</id>
    </interactant>
    <interactant intactId="EBI-27048">
        <id>Q02208</id>
        <label>TOF2</label>
    </interactant>
    <organismsDiffer>false</organismsDiffer>
    <experiments>7</experiments>
</comment>
<comment type="subcellular location">
    <subcellularLocation>
        <location evidence="3">Nucleus</location>
        <location evidence="3">Nucleolus</location>
    </subcellularLocation>
</comment>
<comment type="PTM">
    <text evidence="3">Phosphorylated by CDC5.</text>
</comment>
<comment type="miscellaneous">
    <text evidence="4">Present with 1590 molecules/cell in log phase SD medium.</text>
</comment>
<comment type="similarity">
    <text evidence="6">To yeast YKR010c.</text>
</comment>
<dbReference type="EMBL" id="Z49351">
    <property type="protein sequence ID" value="CAA89367.1"/>
    <property type="molecule type" value="Genomic_DNA"/>
</dbReference>
<dbReference type="EMBL" id="BK006943">
    <property type="protein sequence ID" value="DAA08724.1"/>
    <property type="molecule type" value="Genomic_DNA"/>
</dbReference>
<dbReference type="PIR" id="S56852">
    <property type="entry name" value="S56852"/>
</dbReference>
<dbReference type="RefSeq" id="NP_012459.1">
    <property type="nucleotide sequence ID" value="NM_001181509.1"/>
</dbReference>
<dbReference type="BioGRID" id="33680">
    <property type="interactions" value="136"/>
</dbReference>
<dbReference type="ComplexPortal" id="CPX-1669">
    <property type="entry name" value="RENT complex"/>
</dbReference>
<dbReference type="DIP" id="DIP-5153N"/>
<dbReference type="FunCoup" id="P47035">
    <property type="interactions" value="948"/>
</dbReference>
<dbReference type="IntAct" id="P47035">
    <property type="interactions" value="119"/>
</dbReference>
<dbReference type="MINT" id="P47035"/>
<dbReference type="STRING" id="4932.YJL076W"/>
<dbReference type="CarbonylDB" id="P47035"/>
<dbReference type="GlyGen" id="P47035">
    <property type="glycosylation" value="2 sites, 1 O-linked glycan (1 site)"/>
</dbReference>
<dbReference type="iPTMnet" id="P47035"/>
<dbReference type="PaxDb" id="4932-YJL076W"/>
<dbReference type="PeptideAtlas" id="P47035"/>
<dbReference type="EnsemblFungi" id="YJL076W_mRNA">
    <property type="protein sequence ID" value="YJL076W"/>
    <property type="gene ID" value="YJL076W"/>
</dbReference>
<dbReference type="GeneID" id="853369"/>
<dbReference type="KEGG" id="sce:YJL076W"/>
<dbReference type="AGR" id="SGD:S000003612"/>
<dbReference type="SGD" id="S000003612">
    <property type="gene designation" value="NET1"/>
</dbReference>
<dbReference type="VEuPathDB" id="FungiDB:YJL076W"/>
<dbReference type="eggNOG" id="ENOG502QW4V">
    <property type="taxonomic scope" value="Eukaryota"/>
</dbReference>
<dbReference type="GeneTree" id="ENSGT00940000176631"/>
<dbReference type="HOGENOM" id="CLU_004459_0_0_1"/>
<dbReference type="InParanoid" id="P47035"/>
<dbReference type="OMA" id="KCEKMYP"/>
<dbReference type="OrthoDB" id="6365676at2759"/>
<dbReference type="BioCyc" id="YEAST:G3O-31533-MONOMER"/>
<dbReference type="BioGRID-ORCS" id="853369">
    <property type="hits" value="4 hits in 10 CRISPR screens"/>
</dbReference>
<dbReference type="CD-CODE" id="A97FB2F6">
    <property type="entry name" value="rDNA locus"/>
</dbReference>
<dbReference type="PRO" id="PR:P47035"/>
<dbReference type="Proteomes" id="UP000002311">
    <property type="component" value="Chromosome X"/>
</dbReference>
<dbReference type="RNAct" id="P47035">
    <property type="molecule type" value="protein"/>
</dbReference>
<dbReference type="GO" id="GO:0005730">
    <property type="term" value="C:nucleolus"/>
    <property type="evidence" value="ECO:0000314"/>
    <property type="project" value="SGD"/>
</dbReference>
<dbReference type="GO" id="GO:0030869">
    <property type="term" value="C:RENT complex"/>
    <property type="evidence" value="ECO:0000314"/>
    <property type="project" value="SGD"/>
</dbReference>
<dbReference type="GO" id="GO:0019211">
    <property type="term" value="F:phosphatase activator activity"/>
    <property type="evidence" value="ECO:0000318"/>
    <property type="project" value="GO_Central"/>
</dbReference>
<dbReference type="GO" id="GO:0004864">
    <property type="term" value="F:protein phosphatase inhibitor activity"/>
    <property type="evidence" value="ECO:0000314"/>
    <property type="project" value="SGD"/>
</dbReference>
<dbReference type="GO" id="GO:0000182">
    <property type="term" value="F:rDNA binding"/>
    <property type="evidence" value="ECO:0000314"/>
    <property type="project" value="SGD"/>
</dbReference>
<dbReference type="GO" id="GO:0051301">
    <property type="term" value="P:cell division"/>
    <property type="evidence" value="ECO:0007669"/>
    <property type="project" value="UniProtKB-KW"/>
</dbReference>
<dbReference type="GO" id="GO:0001100">
    <property type="term" value="P:negative regulation of exit from mitosis"/>
    <property type="evidence" value="ECO:0000315"/>
    <property type="project" value="SGD"/>
</dbReference>
<dbReference type="GO" id="GO:0007000">
    <property type="term" value="P:nucleolus organization"/>
    <property type="evidence" value="ECO:0000315"/>
    <property type="project" value="SGD"/>
</dbReference>
<dbReference type="GO" id="GO:1904751">
    <property type="term" value="P:positive regulation of protein localization to nucleolus"/>
    <property type="evidence" value="ECO:0000315"/>
    <property type="project" value="SGD"/>
</dbReference>
<dbReference type="GO" id="GO:1902570">
    <property type="term" value="P:protein localization to nucleolus"/>
    <property type="evidence" value="ECO:0000314"/>
    <property type="project" value="SGD"/>
</dbReference>
<dbReference type="GO" id="GO:0000183">
    <property type="term" value="P:rDNA heterochromatin formation"/>
    <property type="evidence" value="ECO:0000315"/>
    <property type="project" value="SGD"/>
</dbReference>
<dbReference type="InterPro" id="IPR018844">
    <property type="entry name" value="Dnt1-like_N"/>
</dbReference>
<dbReference type="InterPro" id="IPR043185">
    <property type="entry name" value="Net1/Tof2"/>
</dbReference>
<dbReference type="PANTHER" id="PTHR28196">
    <property type="entry name" value="NUCLEOLAR PROTEIN NET1-RELATED"/>
    <property type="match status" value="1"/>
</dbReference>
<dbReference type="PANTHER" id="PTHR28196:SF1">
    <property type="entry name" value="NUCLEOLAR PROTEIN NET1-RELATED"/>
    <property type="match status" value="1"/>
</dbReference>
<dbReference type="Pfam" id="PF10407">
    <property type="entry name" value="Cytokin_check_N"/>
    <property type="match status" value="1"/>
</dbReference>
<organism>
    <name type="scientific">Saccharomyces cerevisiae (strain ATCC 204508 / S288c)</name>
    <name type="common">Baker's yeast</name>
    <dbReference type="NCBI Taxonomy" id="559292"/>
    <lineage>
        <taxon>Eukaryota</taxon>
        <taxon>Fungi</taxon>
        <taxon>Dikarya</taxon>
        <taxon>Ascomycota</taxon>
        <taxon>Saccharomycotina</taxon>
        <taxon>Saccharomycetes</taxon>
        <taxon>Saccharomycetales</taxon>
        <taxon>Saccharomycetaceae</taxon>
        <taxon>Saccharomyces</taxon>
    </lineage>
</organism>